<reference key="1">
    <citation type="journal article" date="2005" name="Nature">
        <title>Sequencing of Aspergillus nidulans and comparative analysis with A. fumigatus and A. oryzae.</title>
        <authorList>
            <person name="Galagan J.E."/>
            <person name="Calvo S.E."/>
            <person name="Cuomo C."/>
            <person name="Ma L.-J."/>
            <person name="Wortman J.R."/>
            <person name="Batzoglou S."/>
            <person name="Lee S.-I."/>
            <person name="Bastuerkmen M."/>
            <person name="Spevak C.C."/>
            <person name="Clutterbuck J."/>
            <person name="Kapitonov V."/>
            <person name="Jurka J."/>
            <person name="Scazzocchio C."/>
            <person name="Farman M.L."/>
            <person name="Butler J."/>
            <person name="Purcell S."/>
            <person name="Harris S."/>
            <person name="Braus G.H."/>
            <person name="Draht O."/>
            <person name="Busch S."/>
            <person name="D'Enfert C."/>
            <person name="Bouchier C."/>
            <person name="Goldman G.H."/>
            <person name="Bell-Pedersen D."/>
            <person name="Griffiths-Jones S."/>
            <person name="Doonan J.H."/>
            <person name="Yu J."/>
            <person name="Vienken K."/>
            <person name="Pain A."/>
            <person name="Freitag M."/>
            <person name="Selker E.U."/>
            <person name="Archer D.B."/>
            <person name="Penalva M.A."/>
            <person name="Oakley B.R."/>
            <person name="Momany M."/>
            <person name="Tanaka T."/>
            <person name="Kumagai T."/>
            <person name="Asai K."/>
            <person name="Machida M."/>
            <person name="Nierman W.C."/>
            <person name="Denning D.W."/>
            <person name="Caddick M.X."/>
            <person name="Hynes M."/>
            <person name="Paoletti M."/>
            <person name="Fischer R."/>
            <person name="Miller B.L."/>
            <person name="Dyer P.S."/>
            <person name="Sachs M.S."/>
            <person name="Osmani S.A."/>
            <person name="Birren B.W."/>
        </authorList>
    </citation>
    <scope>NUCLEOTIDE SEQUENCE [LARGE SCALE GENOMIC DNA]</scope>
    <source>
        <strain>FGSC A4 / ATCC 38163 / CBS 112.46 / NRRL 194 / M139</strain>
    </source>
</reference>
<reference key="2">
    <citation type="journal article" date="2009" name="Fungal Genet. Biol.">
        <title>The 2008 update of the Aspergillus nidulans genome annotation: a community effort.</title>
        <authorList>
            <person name="Wortman J.R."/>
            <person name="Gilsenan J.M."/>
            <person name="Joardar V."/>
            <person name="Deegan J."/>
            <person name="Clutterbuck J."/>
            <person name="Andersen M.R."/>
            <person name="Archer D."/>
            <person name="Bencina M."/>
            <person name="Braus G."/>
            <person name="Coutinho P."/>
            <person name="von Dohren H."/>
            <person name="Doonan J."/>
            <person name="Driessen A.J."/>
            <person name="Durek P."/>
            <person name="Espeso E."/>
            <person name="Fekete E."/>
            <person name="Flipphi M."/>
            <person name="Estrada C.G."/>
            <person name="Geysens S."/>
            <person name="Goldman G."/>
            <person name="de Groot P.W."/>
            <person name="Hansen K."/>
            <person name="Harris S.D."/>
            <person name="Heinekamp T."/>
            <person name="Helmstaedt K."/>
            <person name="Henrissat B."/>
            <person name="Hofmann G."/>
            <person name="Homan T."/>
            <person name="Horio T."/>
            <person name="Horiuchi H."/>
            <person name="James S."/>
            <person name="Jones M."/>
            <person name="Karaffa L."/>
            <person name="Karanyi Z."/>
            <person name="Kato M."/>
            <person name="Keller N."/>
            <person name="Kelly D.E."/>
            <person name="Kiel J.A."/>
            <person name="Kim J.M."/>
            <person name="van der Klei I.J."/>
            <person name="Klis F.M."/>
            <person name="Kovalchuk A."/>
            <person name="Krasevec N."/>
            <person name="Kubicek C.P."/>
            <person name="Liu B."/>
            <person name="Maccabe A."/>
            <person name="Meyer V."/>
            <person name="Mirabito P."/>
            <person name="Miskei M."/>
            <person name="Mos M."/>
            <person name="Mullins J."/>
            <person name="Nelson D.R."/>
            <person name="Nielsen J."/>
            <person name="Oakley B.R."/>
            <person name="Osmani S.A."/>
            <person name="Pakula T."/>
            <person name="Paszewski A."/>
            <person name="Paulsen I."/>
            <person name="Pilsyk S."/>
            <person name="Pocsi I."/>
            <person name="Punt P.J."/>
            <person name="Ram A.F."/>
            <person name="Ren Q."/>
            <person name="Robellet X."/>
            <person name="Robson G."/>
            <person name="Seiboth B."/>
            <person name="van Solingen P."/>
            <person name="Specht T."/>
            <person name="Sun J."/>
            <person name="Taheri-Talesh N."/>
            <person name="Takeshita N."/>
            <person name="Ussery D."/>
            <person name="vanKuyk P.A."/>
            <person name="Visser H."/>
            <person name="van de Vondervoort P.J."/>
            <person name="de Vries R.P."/>
            <person name="Walton J."/>
            <person name="Xiang X."/>
            <person name="Xiong Y."/>
            <person name="Zeng A.P."/>
            <person name="Brandt B.W."/>
            <person name="Cornell M.J."/>
            <person name="van den Hondel C.A."/>
            <person name="Visser J."/>
            <person name="Oliver S.G."/>
            <person name="Turner G."/>
        </authorList>
    </citation>
    <scope>GENOME REANNOTATION</scope>
    <source>
        <strain>FGSC A4 / ATCC 38163 / CBS 112.46 / NRRL 194 / M139</strain>
    </source>
</reference>
<protein>
    <recommendedName>
        <fullName>Peptidyl-prolyl isomerase cwc27</fullName>
        <shortName>PPIase cwc27</shortName>
        <ecNumber>5.2.1.8</ecNumber>
    </recommendedName>
    <alternativeName>
        <fullName>Rotamase cwc27</fullName>
    </alternativeName>
</protein>
<name>CWC27_EMENI</name>
<organism>
    <name type="scientific">Emericella nidulans (strain FGSC A4 / ATCC 38163 / CBS 112.46 / NRRL 194 / M139)</name>
    <name type="common">Aspergillus nidulans</name>
    <dbReference type="NCBI Taxonomy" id="227321"/>
    <lineage>
        <taxon>Eukaryota</taxon>
        <taxon>Fungi</taxon>
        <taxon>Dikarya</taxon>
        <taxon>Ascomycota</taxon>
        <taxon>Pezizomycotina</taxon>
        <taxon>Eurotiomycetes</taxon>
        <taxon>Eurotiomycetidae</taxon>
        <taxon>Eurotiales</taxon>
        <taxon>Aspergillaceae</taxon>
        <taxon>Aspergillus</taxon>
        <taxon>Aspergillus subgen. Nidulantes</taxon>
    </lineage>
</organism>
<keyword id="KW-0963">Cytoplasm</keyword>
<keyword id="KW-0413">Isomerase</keyword>
<keyword id="KW-0507">mRNA processing</keyword>
<keyword id="KW-0508">mRNA splicing</keyword>
<keyword id="KW-0539">Nucleus</keyword>
<keyword id="KW-1185">Reference proteome</keyword>
<keyword id="KW-0697">Rotamase</keyword>
<keyword id="KW-0747">Spliceosome</keyword>
<dbReference type="EC" id="5.2.1.8"/>
<dbReference type="EMBL" id="AACD01000139">
    <property type="protein sequence ID" value="EAA59683.1"/>
    <property type="molecule type" value="Genomic_DNA"/>
</dbReference>
<dbReference type="EMBL" id="BN001302">
    <property type="protein sequence ID" value="CBF73806.1"/>
    <property type="molecule type" value="Genomic_DNA"/>
</dbReference>
<dbReference type="RefSeq" id="XP_681330.1">
    <property type="nucleotide sequence ID" value="XM_676238.1"/>
</dbReference>
<dbReference type="SMR" id="Q5AUG9"/>
<dbReference type="STRING" id="227321.Q5AUG9"/>
<dbReference type="EnsemblFungi" id="CBF73806">
    <property type="protein sequence ID" value="CBF73806"/>
    <property type="gene ID" value="ANIA_08061"/>
</dbReference>
<dbReference type="KEGG" id="ani:ANIA_08061"/>
<dbReference type="VEuPathDB" id="FungiDB:AN8061"/>
<dbReference type="eggNOG" id="KOG0885">
    <property type="taxonomic scope" value="Eukaryota"/>
</dbReference>
<dbReference type="HOGENOM" id="CLU_012062_14_5_1"/>
<dbReference type="InParanoid" id="Q5AUG9"/>
<dbReference type="OMA" id="CKNFLQH"/>
<dbReference type="OrthoDB" id="442970at2759"/>
<dbReference type="Proteomes" id="UP000000560">
    <property type="component" value="Chromosome II"/>
</dbReference>
<dbReference type="GO" id="GO:0071013">
    <property type="term" value="C:catalytic step 2 spliceosome"/>
    <property type="evidence" value="ECO:0000318"/>
    <property type="project" value="GO_Central"/>
</dbReference>
<dbReference type="GO" id="GO:0005737">
    <property type="term" value="C:cytoplasm"/>
    <property type="evidence" value="ECO:0007669"/>
    <property type="project" value="UniProtKB-SubCell"/>
</dbReference>
<dbReference type="GO" id="GO:0003755">
    <property type="term" value="F:peptidyl-prolyl cis-trans isomerase activity"/>
    <property type="evidence" value="ECO:0007669"/>
    <property type="project" value="UniProtKB-KW"/>
</dbReference>
<dbReference type="GO" id="GO:0006397">
    <property type="term" value="P:mRNA processing"/>
    <property type="evidence" value="ECO:0007669"/>
    <property type="project" value="UniProtKB-KW"/>
</dbReference>
<dbReference type="GO" id="GO:0006457">
    <property type="term" value="P:protein folding"/>
    <property type="evidence" value="ECO:0000318"/>
    <property type="project" value="GO_Central"/>
</dbReference>
<dbReference type="GO" id="GO:0008380">
    <property type="term" value="P:RNA splicing"/>
    <property type="evidence" value="ECO:0007669"/>
    <property type="project" value="UniProtKB-KW"/>
</dbReference>
<dbReference type="CDD" id="cd01925">
    <property type="entry name" value="cyclophilin_CeCYP16-like"/>
    <property type="match status" value="1"/>
</dbReference>
<dbReference type="FunFam" id="2.40.100.10:FF:000034">
    <property type="entry name" value="Peptidyl-prolyl isomerase CWC27 protein"/>
    <property type="match status" value="1"/>
</dbReference>
<dbReference type="Gene3D" id="2.40.100.10">
    <property type="entry name" value="Cyclophilin-like"/>
    <property type="match status" value="1"/>
</dbReference>
<dbReference type="InterPro" id="IPR029000">
    <property type="entry name" value="Cyclophilin-like_dom_sf"/>
</dbReference>
<dbReference type="InterPro" id="IPR020892">
    <property type="entry name" value="Cyclophilin-type_PPIase_CS"/>
</dbReference>
<dbReference type="InterPro" id="IPR002130">
    <property type="entry name" value="Cyclophilin-type_PPIase_dom"/>
</dbReference>
<dbReference type="InterPro" id="IPR044666">
    <property type="entry name" value="Cyclophilin_A-like"/>
</dbReference>
<dbReference type="PANTHER" id="PTHR45625">
    <property type="entry name" value="PEPTIDYL-PROLYL CIS-TRANS ISOMERASE-RELATED"/>
    <property type="match status" value="1"/>
</dbReference>
<dbReference type="PANTHER" id="PTHR45625:SF6">
    <property type="entry name" value="SPLICEOSOME-ASSOCIATED PROTEIN CWC27 HOMOLOG"/>
    <property type="match status" value="1"/>
</dbReference>
<dbReference type="Pfam" id="PF00160">
    <property type="entry name" value="Pro_isomerase"/>
    <property type="match status" value="1"/>
</dbReference>
<dbReference type="PRINTS" id="PR00153">
    <property type="entry name" value="CSAPPISMRASE"/>
</dbReference>
<dbReference type="SUPFAM" id="SSF50891">
    <property type="entry name" value="Cyclophilin-like"/>
    <property type="match status" value="1"/>
</dbReference>
<dbReference type="PROSITE" id="PS00170">
    <property type="entry name" value="CSA_PPIASE_1"/>
    <property type="match status" value="1"/>
</dbReference>
<dbReference type="PROSITE" id="PS50072">
    <property type="entry name" value="CSA_PPIASE_2"/>
    <property type="match status" value="1"/>
</dbReference>
<gene>
    <name type="primary">cwc27</name>
    <name type="ORF">AN8061</name>
</gene>
<proteinExistence type="inferred from homology"/>
<evidence type="ECO:0000250" key="1"/>
<evidence type="ECO:0000255" key="2">
    <source>
        <dbReference type="PROSITE-ProRule" id="PRU00156"/>
    </source>
</evidence>
<evidence type="ECO:0000256" key="3">
    <source>
        <dbReference type="SAM" id="MobiDB-lite"/>
    </source>
</evidence>
<evidence type="ECO:0000305" key="4"/>
<accession>Q5AUG9</accession>
<accession>C8V676</accession>
<sequence length="558" mass="61731">MSAHYATEPAPTASATLHTTFGPLHIALFAKQTPLTCRNFLQHCMDNYYAGTIFHRVVPDFIIQGGDPTGTGSGGTSIYEYPEFEYDPDARDPNEKVVLRDEIHSRLRFNRRGLVGMAKSEDGSYGSQFFITLANTERELNGQCTLFGRLEGDSLYNMLKIAEAERIEGTERPVYPVKITSCEVGDLGPFVDKVKKRQVVATGPKTEEKPAAKKKKKAKPGKALLSFGGDDEEDEDMPIRPAKPKFNPMLVTDTKLPEKESSTKGEASQTRKRPRSPSPKRQPQPSAPPKNRPKTPEPTKQLPLPNPESPERSPSPPPKQSFLSRTNAEIENLKASMRRTAHAPAAETKPKSALEAMIPQTAIRGRKRPPPGSVSASTSAPNGITGFSSNSAEAEALKMFNAFRAKLESSDSQPTAAAAKRLSVAKTDAAEERKETPDEDEESQLCDLHFIANCQSCKSWDNDVEGGANNGADDDVNDSGWLNHQLRFGKDTLGKDLNWKREHQDVDTLMVIDPREKEKELADSSRPGTKRVKGRGLERDRERERKKGRVGDLEWSKR</sequence>
<comment type="function">
    <text evidence="1">PPIases accelerate the folding of proteins. It catalyzes the cis-trans isomerization of proline imidic peptide bonds in oligopeptides. Involved in pre-mRNA splicing (By similarity).</text>
</comment>
<comment type="catalytic activity">
    <reaction>
        <text>[protein]-peptidylproline (omega=180) = [protein]-peptidylproline (omega=0)</text>
        <dbReference type="Rhea" id="RHEA:16237"/>
        <dbReference type="Rhea" id="RHEA-COMP:10747"/>
        <dbReference type="Rhea" id="RHEA-COMP:10748"/>
        <dbReference type="ChEBI" id="CHEBI:83833"/>
        <dbReference type="ChEBI" id="CHEBI:83834"/>
        <dbReference type="EC" id="5.2.1.8"/>
    </reaction>
</comment>
<comment type="subunit">
    <text evidence="1">Associated with the spliceosome.</text>
</comment>
<comment type="subcellular location">
    <subcellularLocation>
        <location evidence="1">Cytoplasm</location>
    </subcellularLocation>
    <subcellularLocation>
        <location evidence="1">Nucleus</location>
    </subcellularLocation>
</comment>
<comment type="similarity">
    <text evidence="4">Belongs to the cyclophilin-type PPIase family. CWC27 subfamily.</text>
</comment>
<feature type="chain" id="PRO_0000064184" description="Peptidyl-prolyl isomerase cwc27">
    <location>
        <begin position="1"/>
        <end position="558"/>
    </location>
</feature>
<feature type="domain" description="PPIase cyclophilin-type" evidence="2">
    <location>
        <begin position="11"/>
        <end position="184"/>
    </location>
</feature>
<feature type="region of interest" description="Disordered" evidence="3">
    <location>
        <begin position="201"/>
        <end position="388"/>
    </location>
</feature>
<feature type="region of interest" description="Disordered" evidence="3">
    <location>
        <begin position="408"/>
        <end position="443"/>
    </location>
</feature>
<feature type="region of interest" description="Disordered" evidence="3">
    <location>
        <begin position="510"/>
        <end position="558"/>
    </location>
</feature>
<feature type="compositionally biased region" description="Pro residues" evidence="3">
    <location>
        <begin position="276"/>
        <end position="290"/>
    </location>
</feature>
<feature type="compositionally biased region" description="Pro residues" evidence="3">
    <location>
        <begin position="304"/>
        <end position="319"/>
    </location>
</feature>
<feature type="compositionally biased region" description="Polar residues" evidence="3">
    <location>
        <begin position="374"/>
        <end position="388"/>
    </location>
</feature>
<feature type="compositionally biased region" description="Basic and acidic residues" evidence="3">
    <location>
        <begin position="513"/>
        <end position="523"/>
    </location>
</feature>
<feature type="compositionally biased region" description="Basic and acidic residues" evidence="3">
    <location>
        <begin position="535"/>
        <end position="558"/>
    </location>
</feature>